<accession>B5QW75</accession>
<sequence>MTPGEVRRLYFIIRTFLSYGLDELIPRMRLTLPLRLWRYSLFWMPNRHKDKLLGERLRLALQELGPVWIKFGQMLSTRRDLFPPQIADQLALLQDKVAPFDGRLAKAQIEEAMGGLPVDAWFDDFDIQPLASASIAQVHTARLKSNGKEVVIKVIRPDILPVIQADLKLIYRLARWVPRLLPDGRRLRPTEVVREYEKTLIDELNLLRESANAIQLRRNFENSPMLYIPEVYSDYCSQNMMVMERIYGIPVSDVAALEKNGTNMKLLAERGVKVFFTQVFRDSFFHADMHPGNIFVSHEHPENPQYIGIDCGIVGSLNKEDKRYLAENFIAFFNRDYRKVAELHVDSGWVPPDTNVEDFEFAIRTVCEPIFEKPLAEISFGHVLLNLFNTARRFNMEVQPQLVLLQKTLLYVEGVGRQLYPQLDLWKTAKPFLESWIKDQVGIPALTRALKEKAPFWVEKMPEIPELVYDSLRQGKYLQHSVDKIARELQVNHVRQSQSRYLLGIGATLLLSGSFLLVNRPEWGLMPGWLMVGGVVVWLVGWRKTR</sequence>
<evidence type="ECO:0000255" key="1">
    <source>
        <dbReference type="HAMAP-Rule" id="MF_00414"/>
    </source>
</evidence>
<dbReference type="EC" id="2.7.-.-" evidence="1"/>
<dbReference type="EMBL" id="AM933172">
    <property type="protein sequence ID" value="CAR35343.1"/>
    <property type="molecule type" value="Genomic_DNA"/>
</dbReference>
<dbReference type="RefSeq" id="WP_000187554.1">
    <property type="nucleotide sequence ID" value="NC_011294.1"/>
</dbReference>
<dbReference type="SMR" id="B5QW75"/>
<dbReference type="KEGG" id="set:SEN3767"/>
<dbReference type="HOGENOM" id="CLU_006533_0_0_6"/>
<dbReference type="UniPathway" id="UPA00232"/>
<dbReference type="Proteomes" id="UP000000613">
    <property type="component" value="Chromosome"/>
</dbReference>
<dbReference type="GO" id="GO:0005886">
    <property type="term" value="C:plasma membrane"/>
    <property type="evidence" value="ECO:0007669"/>
    <property type="project" value="UniProtKB-SubCell"/>
</dbReference>
<dbReference type="GO" id="GO:0005524">
    <property type="term" value="F:ATP binding"/>
    <property type="evidence" value="ECO:0007669"/>
    <property type="project" value="UniProtKB-KW"/>
</dbReference>
<dbReference type="GO" id="GO:0004672">
    <property type="term" value="F:protein kinase activity"/>
    <property type="evidence" value="ECO:0007669"/>
    <property type="project" value="UniProtKB-UniRule"/>
</dbReference>
<dbReference type="GO" id="GO:0010795">
    <property type="term" value="P:regulation of ubiquinone biosynthetic process"/>
    <property type="evidence" value="ECO:0007669"/>
    <property type="project" value="UniProtKB-UniRule"/>
</dbReference>
<dbReference type="GO" id="GO:0006744">
    <property type="term" value="P:ubiquinone biosynthetic process"/>
    <property type="evidence" value="ECO:0007669"/>
    <property type="project" value="UniProtKB-UniPathway"/>
</dbReference>
<dbReference type="CDD" id="cd13972">
    <property type="entry name" value="UbiB"/>
    <property type="match status" value="1"/>
</dbReference>
<dbReference type="HAMAP" id="MF_00414">
    <property type="entry name" value="UbiB"/>
    <property type="match status" value="1"/>
</dbReference>
<dbReference type="InterPro" id="IPR004147">
    <property type="entry name" value="ABC1_dom"/>
</dbReference>
<dbReference type="InterPro" id="IPR011009">
    <property type="entry name" value="Kinase-like_dom_sf"/>
</dbReference>
<dbReference type="InterPro" id="IPR010232">
    <property type="entry name" value="UbiB"/>
</dbReference>
<dbReference type="InterPro" id="IPR045308">
    <property type="entry name" value="UbiB_bact"/>
</dbReference>
<dbReference type="InterPro" id="IPR050154">
    <property type="entry name" value="UbiB_kinase"/>
</dbReference>
<dbReference type="NCBIfam" id="NF003404">
    <property type="entry name" value="PRK04750.1"/>
    <property type="match status" value="1"/>
</dbReference>
<dbReference type="NCBIfam" id="TIGR01982">
    <property type="entry name" value="UbiB"/>
    <property type="match status" value="1"/>
</dbReference>
<dbReference type="PANTHER" id="PTHR10566">
    <property type="entry name" value="CHAPERONE-ACTIVITY OF BC1 COMPLEX CABC1 -RELATED"/>
    <property type="match status" value="1"/>
</dbReference>
<dbReference type="PANTHER" id="PTHR10566:SF113">
    <property type="entry name" value="PROTEIN ACTIVITY OF BC1 COMPLEX KINASE 7, CHLOROPLASTIC"/>
    <property type="match status" value="1"/>
</dbReference>
<dbReference type="Pfam" id="PF03109">
    <property type="entry name" value="ABC1"/>
    <property type="match status" value="1"/>
</dbReference>
<dbReference type="SUPFAM" id="SSF56112">
    <property type="entry name" value="Protein kinase-like (PK-like)"/>
    <property type="match status" value="1"/>
</dbReference>
<gene>
    <name evidence="1" type="primary">ubiB</name>
    <name type="ordered locus">SEN3767</name>
</gene>
<comment type="function">
    <text evidence="1">Is probably a protein kinase regulator of UbiI activity which is involved in aerobic coenzyme Q (ubiquinone) biosynthesis.</text>
</comment>
<comment type="pathway">
    <text>Cofactor biosynthesis; ubiquinone biosynthesis [regulation].</text>
</comment>
<comment type="subcellular location">
    <subcellularLocation>
        <location evidence="1">Cell inner membrane</location>
        <topology evidence="1">Multi-pass membrane protein</topology>
    </subcellularLocation>
</comment>
<comment type="similarity">
    <text evidence="1">Belongs to the ABC1 family. UbiB subfamily.</text>
</comment>
<proteinExistence type="inferred from homology"/>
<keyword id="KW-0067">ATP-binding</keyword>
<keyword id="KW-0997">Cell inner membrane</keyword>
<keyword id="KW-1003">Cell membrane</keyword>
<keyword id="KW-0418">Kinase</keyword>
<keyword id="KW-0472">Membrane</keyword>
<keyword id="KW-0547">Nucleotide-binding</keyword>
<keyword id="KW-0808">Transferase</keyword>
<keyword id="KW-0812">Transmembrane</keyword>
<keyword id="KW-1133">Transmembrane helix</keyword>
<keyword id="KW-0831">Ubiquinone biosynthesis</keyword>
<organism>
    <name type="scientific">Salmonella enteritidis PT4 (strain P125109)</name>
    <dbReference type="NCBI Taxonomy" id="550537"/>
    <lineage>
        <taxon>Bacteria</taxon>
        <taxon>Pseudomonadati</taxon>
        <taxon>Pseudomonadota</taxon>
        <taxon>Gammaproteobacteria</taxon>
        <taxon>Enterobacterales</taxon>
        <taxon>Enterobacteriaceae</taxon>
        <taxon>Salmonella</taxon>
    </lineage>
</organism>
<reference key="1">
    <citation type="journal article" date="2008" name="Genome Res.">
        <title>Comparative genome analysis of Salmonella enteritidis PT4 and Salmonella gallinarum 287/91 provides insights into evolutionary and host adaptation pathways.</title>
        <authorList>
            <person name="Thomson N.R."/>
            <person name="Clayton D.J."/>
            <person name="Windhorst D."/>
            <person name="Vernikos G."/>
            <person name="Davidson S."/>
            <person name="Churcher C."/>
            <person name="Quail M.A."/>
            <person name="Stevens M."/>
            <person name="Jones M.A."/>
            <person name="Watson M."/>
            <person name="Barron A."/>
            <person name="Layton A."/>
            <person name="Pickard D."/>
            <person name="Kingsley R.A."/>
            <person name="Bignell A."/>
            <person name="Clark L."/>
            <person name="Harris B."/>
            <person name="Ormond D."/>
            <person name="Abdellah Z."/>
            <person name="Brooks K."/>
            <person name="Cherevach I."/>
            <person name="Chillingworth T."/>
            <person name="Woodward J."/>
            <person name="Norberczak H."/>
            <person name="Lord A."/>
            <person name="Arrowsmith C."/>
            <person name="Jagels K."/>
            <person name="Moule S."/>
            <person name="Mungall K."/>
            <person name="Saunders M."/>
            <person name="Whitehead S."/>
            <person name="Chabalgoity J.A."/>
            <person name="Maskell D."/>
            <person name="Humphreys T."/>
            <person name="Roberts M."/>
            <person name="Barrow P.A."/>
            <person name="Dougan G."/>
            <person name="Parkhill J."/>
        </authorList>
    </citation>
    <scope>NUCLEOTIDE SEQUENCE [LARGE SCALE GENOMIC DNA]</scope>
    <source>
        <strain>P125109</strain>
    </source>
</reference>
<protein>
    <recommendedName>
        <fullName evidence="1">Probable protein kinase UbiB</fullName>
        <ecNumber evidence="1">2.7.-.-</ecNumber>
    </recommendedName>
    <alternativeName>
        <fullName evidence="1">Ubiquinone biosynthesis protein UbiB</fullName>
    </alternativeName>
</protein>
<feature type="chain" id="PRO_1000123918" description="Probable protein kinase UbiB">
    <location>
        <begin position="1"/>
        <end position="546"/>
    </location>
</feature>
<feature type="transmembrane region" description="Helical" evidence="1">
    <location>
        <begin position="501"/>
        <end position="521"/>
    </location>
</feature>
<feature type="transmembrane region" description="Helical" evidence="1">
    <location>
        <begin position="522"/>
        <end position="542"/>
    </location>
</feature>
<feature type="domain" description="Protein kinase" evidence="1">
    <location>
        <begin position="124"/>
        <end position="502"/>
    </location>
</feature>
<feature type="active site" description="Proton acceptor" evidence="1">
    <location>
        <position position="288"/>
    </location>
</feature>
<feature type="binding site" evidence="1">
    <location>
        <begin position="130"/>
        <end position="138"/>
    </location>
    <ligand>
        <name>ATP</name>
        <dbReference type="ChEBI" id="CHEBI:30616"/>
    </ligand>
</feature>
<feature type="binding site" evidence="1">
    <location>
        <position position="153"/>
    </location>
    <ligand>
        <name>ATP</name>
        <dbReference type="ChEBI" id="CHEBI:30616"/>
    </ligand>
</feature>
<name>UBIB_SALEP</name>